<organism>
    <name type="scientific">Prochlorococcus marinus (strain MIT 9312)</name>
    <dbReference type="NCBI Taxonomy" id="74546"/>
    <lineage>
        <taxon>Bacteria</taxon>
        <taxon>Bacillati</taxon>
        <taxon>Cyanobacteriota</taxon>
        <taxon>Cyanophyceae</taxon>
        <taxon>Synechococcales</taxon>
        <taxon>Prochlorococcaceae</taxon>
        <taxon>Prochlorococcus</taxon>
    </lineage>
</organism>
<gene>
    <name evidence="1" type="primary">atpH</name>
    <name evidence="1" type="synonym">atpD</name>
    <name type="ordered locus">PMT9312_1545</name>
</gene>
<proteinExistence type="inferred from homology"/>
<reference key="1">
    <citation type="journal article" date="2006" name="Science">
        <title>Genomic islands and the ecology and evolution of Prochlorococcus.</title>
        <authorList>
            <person name="Coleman M.L."/>
            <person name="Sullivan M.B."/>
            <person name="Martiny A.C."/>
            <person name="Steglich C."/>
            <person name="Barry K."/>
            <person name="Delong E.F."/>
            <person name="Chisholm S.W."/>
        </authorList>
    </citation>
    <scope>NUCLEOTIDE SEQUENCE [LARGE SCALE GENOMIC DNA]</scope>
    <source>
        <strain>MIT 9312</strain>
    </source>
</reference>
<protein>
    <recommendedName>
        <fullName evidence="1">ATP synthase subunit delta</fullName>
    </recommendedName>
    <alternativeName>
        <fullName evidence="1">ATP synthase F(1) sector subunit delta</fullName>
    </alternativeName>
    <alternativeName>
        <fullName evidence="1">F-type ATPase subunit delta</fullName>
        <shortName evidence="1">F-ATPase subunit delta</shortName>
    </alternativeName>
</protein>
<feature type="chain" id="PRO_0000371065" description="ATP synthase subunit delta">
    <location>
        <begin position="1"/>
        <end position="180"/>
    </location>
</feature>
<name>ATPD_PROM9</name>
<comment type="function">
    <text evidence="1">F(1)F(0) ATP synthase produces ATP from ADP in the presence of a proton or sodium gradient. F-type ATPases consist of two structural domains, F(1) containing the extramembraneous catalytic core and F(0) containing the membrane proton channel, linked together by a central stalk and a peripheral stalk. During catalysis, ATP synthesis in the catalytic domain of F(1) is coupled via a rotary mechanism of the central stalk subunits to proton translocation.</text>
</comment>
<comment type="function">
    <text evidence="1">This protein is part of the stalk that links CF(0) to CF(1). It either transmits conformational changes from CF(0) to CF(1) or is implicated in proton conduction.</text>
</comment>
<comment type="subunit">
    <text evidence="1">F-type ATPases have 2 components, F(1) - the catalytic core - and F(0) - the membrane proton channel. F(1) has five subunits: alpha(3), beta(3), gamma(1), delta(1), epsilon(1). CF(0) has four main subunits: a(1), b(1), b'(1) and c(10-14). The alpha and beta chains form an alternating ring which encloses part of the gamma chain. F(1) is attached to F(0) by a central stalk formed by the gamma and epsilon chains, while a peripheral stalk is formed by the delta, b and b' chains.</text>
</comment>
<comment type="subcellular location">
    <subcellularLocation>
        <location evidence="1">Cellular thylakoid membrane</location>
        <topology evidence="1">Peripheral membrane protein</topology>
    </subcellularLocation>
</comment>
<comment type="similarity">
    <text evidence="1">Belongs to the ATPase delta chain family.</text>
</comment>
<keyword id="KW-0066">ATP synthesis</keyword>
<keyword id="KW-0139">CF(1)</keyword>
<keyword id="KW-0375">Hydrogen ion transport</keyword>
<keyword id="KW-0406">Ion transport</keyword>
<keyword id="KW-0472">Membrane</keyword>
<keyword id="KW-0793">Thylakoid</keyword>
<keyword id="KW-0813">Transport</keyword>
<sequence length="180" mass="19717">MPLLNSVTTPYAEALLQVVNENLQTEEMVSEVKQLLELLNDSPELEKALSSPILETEAKKKIIIEIFSNKVNSSLLNFLKLLADRQRIGILTSILNRFLEIYRENSNIALATVTSAVELTDEQKGLITQKIVNIAGTQKLELVTKIDPSLIGGFVASVGSKVIDASLASQIRKLGLSLSK</sequence>
<evidence type="ECO:0000255" key="1">
    <source>
        <dbReference type="HAMAP-Rule" id="MF_01416"/>
    </source>
</evidence>
<dbReference type="EMBL" id="CP000111">
    <property type="protein sequence ID" value="ABB50605.1"/>
    <property type="molecule type" value="Genomic_DNA"/>
</dbReference>
<dbReference type="RefSeq" id="WP_011377088.1">
    <property type="nucleotide sequence ID" value="NC_007577.1"/>
</dbReference>
<dbReference type="SMR" id="Q318U0"/>
<dbReference type="STRING" id="74546.PMT9312_1545"/>
<dbReference type="KEGG" id="pmi:PMT9312_1545"/>
<dbReference type="eggNOG" id="COG0712">
    <property type="taxonomic scope" value="Bacteria"/>
</dbReference>
<dbReference type="HOGENOM" id="CLU_085114_1_1_3"/>
<dbReference type="OrthoDB" id="9802471at2"/>
<dbReference type="Proteomes" id="UP000002715">
    <property type="component" value="Chromosome"/>
</dbReference>
<dbReference type="GO" id="GO:0031676">
    <property type="term" value="C:plasma membrane-derived thylakoid membrane"/>
    <property type="evidence" value="ECO:0007669"/>
    <property type="project" value="UniProtKB-SubCell"/>
</dbReference>
<dbReference type="GO" id="GO:0045259">
    <property type="term" value="C:proton-transporting ATP synthase complex"/>
    <property type="evidence" value="ECO:0007669"/>
    <property type="project" value="UniProtKB-KW"/>
</dbReference>
<dbReference type="GO" id="GO:0046933">
    <property type="term" value="F:proton-transporting ATP synthase activity, rotational mechanism"/>
    <property type="evidence" value="ECO:0007669"/>
    <property type="project" value="UniProtKB-UniRule"/>
</dbReference>
<dbReference type="Gene3D" id="1.10.520.20">
    <property type="entry name" value="N-terminal domain of the delta subunit of the F1F0-ATP synthase"/>
    <property type="match status" value="1"/>
</dbReference>
<dbReference type="HAMAP" id="MF_01416">
    <property type="entry name" value="ATP_synth_delta_bact"/>
    <property type="match status" value="1"/>
</dbReference>
<dbReference type="InterPro" id="IPR026015">
    <property type="entry name" value="ATP_synth_OSCP/delta_N_sf"/>
</dbReference>
<dbReference type="InterPro" id="IPR000711">
    <property type="entry name" value="ATPase_OSCP/dsu"/>
</dbReference>
<dbReference type="NCBIfam" id="TIGR01145">
    <property type="entry name" value="ATP_synt_delta"/>
    <property type="match status" value="1"/>
</dbReference>
<dbReference type="PANTHER" id="PTHR11910">
    <property type="entry name" value="ATP SYNTHASE DELTA CHAIN"/>
    <property type="match status" value="1"/>
</dbReference>
<dbReference type="Pfam" id="PF00213">
    <property type="entry name" value="OSCP"/>
    <property type="match status" value="1"/>
</dbReference>
<dbReference type="PRINTS" id="PR00125">
    <property type="entry name" value="ATPASEDELTA"/>
</dbReference>
<dbReference type="SUPFAM" id="SSF47928">
    <property type="entry name" value="N-terminal domain of the delta subunit of the F1F0-ATP synthase"/>
    <property type="match status" value="1"/>
</dbReference>
<accession>Q318U0</accession>